<reference key="1">
    <citation type="journal article" date="1990" name="Mol. Biochem. Parasitol.">
        <title>Evidence for segmental gene conversion between a cognate hsp 70 gene and the temperature-sensitively transcribed hsp70 genes of Trypanosoma brucei.</title>
        <authorList>
            <person name="Lee M.G.-S."/>
            <person name="Polvere R.I."/>
            <person name="van der Ploeg L.H.T."/>
        </authorList>
    </citation>
    <scope>NUCLEOTIDE SEQUENCE [GENOMIC DNA]</scope>
</reference>
<feature type="chain" id="PRO_0000078322" description="Heat shock cognate HSP70 protein">
    <location>
        <begin position="1"/>
        <end position="676"/>
    </location>
</feature>
<feature type="region of interest" description="Disordered" evidence="1">
    <location>
        <begin position="613"/>
        <end position="676"/>
    </location>
</feature>
<feature type="compositionally biased region" description="Acidic residues" evidence="1">
    <location>
        <begin position="630"/>
        <end position="646"/>
    </location>
</feature>
<keyword id="KW-0067">ATP-binding</keyword>
<keyword id="KW-0547">Nucleotide-binding</keyword>
<keyword id="KW-0346">Stress response</keyword>
<organism>
    <name type="scientific">Trypanosoma brucei brucei</name>
    <dbReference type="NCBI Taxonomy" id="5702"/>
    <lineage>
        <taxon>Eukaryota</taxon>
        <taxon>Discoba</taxon>
        <taxon>Euglenozoa</taxon>
        <taxon>Kinetoplastea</taxon>
        <taxon>Metakinetoplastina</taxon>
        <taxon>Trypanosomatida</taxon>
        <taxon>Trypanosomatidae</taxon>
        <taxon>Trypanosoma</taxon>
    </lineage>
</organism>
<comment type="similarity">
    <text evidence="2">Belongs to the heat shock protein 70 family.</text>
</comment>
<name>HSP7C_TRYBB</name>
<accession>P20030</accession>
<sequence>MTYEGAIGIDLGTTYSCVGVWQNERVEIIANDQGNRTTPSYVAFVNNEVLVGDAAKSHAARGSNGVIFDAKRLIGRKFSDSVVQSDMKHWPFKVEEGEKGGAVMRVEHLGEGMLLQPEQISARVLAYLKSCAESYLGKQVAKAVVTVPAYFNDSQRQATKDAGTIAGLEVLRIINEPTAAAIAYGLDKADEGKERNVLVFDFGGGTFDVSIISVSGGVFEVKATNGDTHLGGEDVDAALLEHALADIRNRYGIEQGSLSQKMLSKLRSRCEEVKRVLSHSTVGEIALDGLLPDGEEYVLKLTRARLEELCTKIFARCLSVVQRALKDASMKVEDIEDVVLVGGSSRIPAVQAQLRELFRGKQLCSSVHPDEAVAYGAAWQAHVLSGGYGESSRTAGIVLLDVVPLSIGVEVDDGKFDVIIRRNTTIPYLATKEYSTVDDNQSEVEIQVFEGERPLTRHNHRLGSFVLDGITPAKHGEPTITVTFSVDADGILTVTAAEELGSVTKTLVVENSERLTSEEVQKMIEVAQKFALTDATALARMEATERLTQWFDRLEAVMETVPQPYSEKLQKRIAFLPHGKEWVGTQLHTYTDAASIEAKVAKIERLAKRALKSARREGKDGWAPGNEDNGSGDDNDGDDNSDEEDELQRGRGVTEGSGRSPIRKRDRIEAINANTE</sequence>
<protein>
    <recommendedName>
        <fullName>Heat shock cognate HSP70 protein</fullName>
    </recommendedName>
</protein>
<evidence type="ECO:0000256" key="1">
    <source>
        <dbReference type="SAM" id="MobiDB-lite"/>
    </source>
</evidence>
<evidence type="ECO:0000305" key="2"/>
<proteinExistence type="inferred from homology"/>
<dbReference type="EMBL" id="M32139">
    <property type="protein sequence ID" value="AAA30208.1"/>
    <property type="molecule type" value="Genomic_DNA"/>
</dbReference>
<dbReference type="PIR" id="A45515">
    <property type="entry name" value="A45515"/>
</dbReference>
<dbReference type="SMR" id="P20030"/>
<dbReference type="GO" id="GO:0005654">
    <property type="term" value="C:nucleoplasm"/>
    <property type="evidence" value="ECO:0000314"/>
    <property type="project" value="GeneDB"/>
</dbReference>
<dbReference type="GO" id="GO:0005634">
    <property type="term" value="C:nucleus"/>
    <property type="evidence" value="ECO:0000314"/>
    <property type="project" value="GeneDB"/>
</dbReference>
<dbReference type="GO" id="GO:0005524">
    <property type="term" value="F:ATP binding"/>
    <property type="evidence" value="ECO:0007669"/>
    <property type="project" value="UniProtKB-KW"/>
</dbReference>
<dbReference type="GO" id="GO:0140662">
    <property type="term" value="F:ATP-dependent protein folding chaperone"/>
    <property type="evidence" value="ECO:0007669"/>
    <property type="project" value="InterPro"/>
</dbReference>
<dbReference type="CDD" id="cd24028">
    <property type="entry name" value="ASKHA_NBD_HSP70_HSPA1-like"/>
    <property type="match status" value="1"/>
</dbReference>
<dbReference type="FunFam" id="2.60.34.10:FF:000023">
    <property type="entry name" value="70 kDa heat shock cognate protein"/>
    <property type="match status" value="1"/>
</dbReference>
<dbReference type="FunFam" id="3.90.640.10:FF:000010">
    <property type="entry name" value="heat shock 70 kDa protein 14"/>
    <property type="match status" value="1"/>
</dbReference>
<dbReference type="FunFam" id="3.30.30.30:FF:000001">
    <property type="entry name" value="heat shock 70 kDa protein-like"/>
    <property type="match status" value="1"/>
</dbReference>
<dbReference type="FunFam" id="3.30.420.40:FF:000026">
    <property type="entry name" value="Heat shock protein 70"/>
    <property type="match status" value="1"/>
</dbReference>
<dbReference type="Gene3D" id="3.30.30.30">
    <property type="match status" value="1"/>
</dbReference>
<dbReference type="Gene3D" id="3.30.420.40">
    <property type="match status" value="2"/>
</dbReference>
<dbReference type="Gene3D" id="3.90.640.10">
    <property type="entry name" value="Actin, Chain A, domain 4"/>
    <property type="match status" value="1"/>
</dbReference>
<dbReference type="Gene3D" id="2.60.34.10">
    <property type="entry name" value="Substrate Binding Domain Of DNAk, Chain A, domain 1"/>
    <property type="match status" value="1"/>
</dbReference>
<dbReference type="InterPro" id="IPR043129">
    <property type="entry name" value="ATPase_NBD"/>
</dbReference>
<dbReference type="InterPro" id="IPR018181">
    <property type="entry name" value="Heat_shock_70_CS"/>
</dbReference>
<dbReference type="InterPro" id="IPR029047">
    <property type="entry name" value="HSP70_peptide-bd_sf"/>
</dbReference>
<dbReference type="InterPro" id="IPR013126">
    <property type="entry name" value="Hsp_70_fam"/>
</dbReference>
<dbReference type="PANTHER" id="PTHR19375">
    <property type="entry name" value="HEAT SHOCK PROTEIN 70KDA"/>
    <property type="match status" value="1"/>
</dbReference>
<dbReference type="Pfam" id="PF00012">
    <property type="entry name" value="HSP70"/>
    <property type="match status" value="1"/>
</dbReference>
<dbReference type="PRINTS" id="PR00301">
    <property type="entry name" value="HEATSHOCK70"/>
</dbReference>
<dbReference type="SUPFAM" id="SSF53067">
    <property type="entry name" value="Actin-like ATPase domain"/>
    <property type="match status" value="2"/>
</dbReference>
<dbReference type="SUPFAM" id="SSF100920">
    <property type="entry name" value="Heat shock protein 70kD (HSP70), peptide-binding domain"/>
    <property type="match status" value="1"/>
</dbReference>
<dbReference type="PROSITE" id="PS00297">
    <property type="entry name" value="HSP70_1"/>
    <property type="match status" value="1"/>
</dbReference>
<dbReference type="PROSITE" id="PS00329">
    <property type="entry name" value="HSP70_2"/>
    <property type="match status" value="1"/>
</dbReference>
<dbReference type="PROSITE" id="PS01036">
    <property type="entry name" value="HSP70_3"/>
    <property type="match status" value="1"/>
</dbReference>